<keyword id="KW-0520">NAD</keyword>
<keyword id="KW-0560">Oxidoreductase</keyword>
<proteinExistence type="evidence at protein level"/>
<organism>
    <name type="scientific">Aspergillus niger</name>
    <dbReference type="NCBI Taxonomy" id="5061"/>
    <lineage>
        <taxon>Eukaryota</taxon>
        <taxon>Fungi</taxon>
        <taxon>Dikarya</taxon>
        <taxon>Ascomycota</taxon>
        <taxon>Pezizomycotina</taxon>
        <taxon>Eurotiomycetes</taxon>
        <taxon>Eurotiomycetidae</taxon>
        <taxon>Eurotiales</taxon>
        <taxon>Aspergillaceae</taxon>
        <taxon>Aspergillus</taxon>
        <taxon>Aspergillus subgen. Circumdati</taxon>
    </lineage>
</organism>
<evidence type="ECO:0000250" key="1"/>
<evidence type="ECO:0000269" key="2">
    <source>
    </source>
</evidence>
<evidence type="ECO:0000269" key="3">
    <source>
    </source>
</evidence>
<evidence type="ECO:0000305" key="4"/>
<reference key="1">
    <citation type="journal article" date="2003" name="Eukaryot. Cell">
        <title>Mannitol is required for stress tolerance in Aspergillus niger conidiospores.</title>
        <authorList>
            <person name="Ruijter G.J.G."/>
            <person name="Bax M."/>
            <person name="Patel H."/>
            <person name="Flitter S.J."/>
            <person name="van de Vondervoort P.J.I."/>
            <person name="de Vries R.P."/>
            <person name="vanKuyk P.A."/>
            <person name="Visser J."/>
        </authorList>
    </citation>
    <scope>NUCLEOTIDE SEQUENCE [GENOMIC DNA]</scope>
    <scope>FUNCTION</scope>
    <scope>INDUCTION</scope>
    <source>
        <strain>ATCC 9029 / NRRL 3 / CBS 120.49 / DSM 2466 / N400 / FGSC 732</strain>
    </source>
</reference>
<reference key="2">
    <citation type="journal article" date="1981" name="Arch. Biochem. Biophys.">
        <title>Purification and kinetic characterization of mannitol-1-phosphate dehydrogenase from Aspergillus niger.</title>
        <authorList>
            <person name="Kiser R.C."/>
            <person name="Niehaus W.G. Jr."/>
        </authorList>
    </citation>
    <scope>FUNCTION</scope>
    <scope>BIOPHYSICOCHEMICAL PROPERTIES</scope>
    <scope>CATALYTIC ACTIVITY</scope>
</reference>
<name>MTLD_ASPNG</name>
<protein>
    <recommendedName>
        <fullName>Mannitol-1-phosphate 5-dehydrogenase</fullName>
        <shortName>M1PDH</shortName>
        <shortName>MPD</shortName>
        <shortName>MPDH</shortName>
        <ecNumber evidence="3">1.1.1.17</ecNumber>
    </recommendedName>
</protein>
<gene>
    <name type="primary">mpdA</name>
</gene>
<dbReference type="EC" id="1.1.1.17" evidence="3"/>
<dbReference type="EMBL" id="AY081178">
    <property type="protein sequence ID" value="AAL89587.1"/>
    <property type="molecule type" value="Genomic_DNA"/>
</dbReference>
<dbReference type="SMR" id="Q8NJJ1"/>
<dbReference type="PaxDb" id="5061-CADANGAP00002039"/>
<dbReference type="VEuPathDB" id="FungiDB:An02g05830"/>
<dbReference type="VEuPathDB" id="FungiDB:ASPNIDRAFT2_1144666"/>
<dbReference type="VEuPathDB" id="FungiDB:ATCC64974_57930"/>
<dbReference type="VEuPathDB" id="FungiDB:M747DRAFT_292171"/>
<dbReference type="eggNOG" id="ENOG502QVPN">
    <property type="taxonomic scope" value="Eukaryota"/>
</dbReference>
<dbReference type="GO" id="GO:0005829">
    <property type="term" value="C:cytosol"/>
    <property type="evidence" value="ECO:0007669"/>
    <property type="project" value="TreeGrafter"/>
</dbReference>
<dbReference type="GO" id="GO:0008926">
    <property type="term" value="F:mannitol-1-phosphate 5-dehydrogenase activity"/>
    <property type="evidence" value="ECO:0000314"/>
    <property type="project" value="UniProtKB"/>
</dbReference>
<dbReference type="GO" id="GO:0051287">
    <property type="term" value="F:NAD binding"/>
    <property type="evidence" value="ECO:0000314"/>
    <property type="project" value="UniProtKB"/>
</dbReference>
<dbReference type="GO" id="GO:0019592">
    <property type="term" value="P:mannitol catabolic process"/>
    <property type="evidence" value="ECO:0007669"/>
    <property type="project" value="TreeGrafter"/>
</dbReference>
<dbReference type="GO" id="GO:0019594">
    <property type="term" value="P:mannitol metabolic process"/>
    <property type="evidence" value="ECO:0000315"/>
    <property type="project" value="UniProtKB"/>
</dbReference>
<dbReference type="GO" id="GO:0009408">
    <property type="term" value="P:response to heat"/>
    <property type="evidence" value="ECO:0000315"/>
    <property type="project" value="UniProtKB"/>
</dbReference>
<dbReference type="GO" id="GO:0006979">
    <property type="term" value="P:response to oxidative stress"/>
    <property type="evidence" value="ECO:0000315"/>
    <property type="project" value="UniProtKB"/>
</dbReference>
<dbReference type="FunFam" id="1.10.1040.10:FF:000009">
    <property type="entry name" value="Mannitol-1-phosphate 5-dehydrogenase"/>
    <property type="match status" value="1"/>
</dbReference>
<dbReference type="FunFam" id="3.40.50.720:FF:000316">
    <property type="entry name" value="Mannitol-1-phosphate 5-dehydrogenase"/>
    <property type="match status" value="1"/>
</dbReference>
<dbReference type="Gene3D" id="1.10.1040.10">
    <property type="entry name" value="N-(1-d-carboxylethyl)-l-norvaline Dehydrogenase, domain 2"/>
    <property type="match status" value="1"/>
</dbReference>
<dbReference type="Gene3D" id="3.40.50.720">
    <property type="entry name" value="NAD(P)-binding Rossmann-like Domain"/>
    <property type="match status" value="1"/>
</dbReference>
<dbReference type="HAMAP" id="MF_00196">
    <property type="entry name" value="Mannitol_dehydrog"/>
    <property type="match status" value="1"/>
</dbReference>
<dbReference type="InterPro" id="IPR008927">
    <property type="entry name" value="6-PGluconate_DH-like_C_sf"/>
</dbReference>
<dbReference type="InterPro" id="IPR013328">
    <property type="entry name" value="6PGD_dom2"/>
</dbReference>
<dbReference type="InterPro" id="IPR023028">
    <property type="entry name" value="Mannitol_1_phos_5_DH"/>
</dbReference>
<dbReference type="InterPro" id="IPR000669">
    <property type="entry name" value="Mannitol_DH"/>
</dbReference>
<dbReference type="InterPro" id="IPR013118">
    <property type="entry name" value="Mannitol_DH_C"/>
</dbReference>
<dbReference type="InterPro" id="IPR013131">
    <property type="entry name" value="Mannitol_DH_N"/>
</dbReference>
<dbReference type="InterPro" id="IPR036291">
    <property type="entry name" value="NAD(P)-bd_dom_sf"/>
</dbReference>
<dbReference type="NCBIfam" id="NF002647">
    <property type="entry name" value="PRK02318.1-3"/>
    <property type="match status" value="1"/>
</dbReference>
<dbReference type="NCBIfam" id="NF002652">
    <property type="entry name" value="PRK02318.2-5"/>
    <property type="match status" value="1"/>
</dbReference>
<dbReference type="PANTHER" id="PTHR30524:SF0">
    <property type="entry name" value="ALTRONATE OXIDOREDUCTASE-RELATED"/>
    <property type="match status" value="1"/>
</dbReference>
<dbReference type="PANTHER" id="PTHR30524">
    <property type="entry name" value="MANNITOL-1-PHOSPHATE 5-DEHYDROGENASE"/>
    <property type="match status" value="1"/>
</dbReference>
<dbReference type="Pfam" id="PF01232">
    <property type="entry name" value="Mannitol_dh"/>
    <property type="match status" value="1"/>
</dbReference>
<dbReference type="Pfam" id="PF08125">
    <property type="entry name" value="Mannitol_dh_C"/>
    <property type="match status" value="1"/>
</dbReference>
<dbReference type="PRINTS" id="PR00084">
    <property type="entry name" value="MTLDHDRGNASE"/>
</dbReference>
<dbReference type="SUPFAM" id="SSF48179">
    <property type="entry name" value="6-phosphogluconate dehydrogenase C-terminal domain-like"/>
    <property type="match status" value="1"/>
</dbReference>
<dbReference type="SUPFAM" id="SSF51735">
    <property type="entry name" value="NAD(P)-binding Rossmann-fold domains"/>
    <property type="match status" value="1"/>
</dbReference>
<feature type="chain" id="PRO_0000371522" description="Mannitol-1-phosphate 5-dehydrogenase">
    <location>
        <begin position="1"/>
        <end position="388"/>
    </location>
</feature>
<feature type="active site" evidence="1">
    <location>
        <position position="213"/>
    </location>
</feature>
<feature type="binding site" evidence="1">
    <location>
        <begin position="5"/>
        <end position="16"/>
    </location>
    <ligand>
        <name>NAD(+)</name>
        <dbReference type="ChEBI" id="CHEBI:57540"/>
    </ligand>
</feature>
<comment type="function">
    <text evidence="2 3">Catalyzes the NAD(H)-dependent interconversion of D-fructose 6-phosphate and D-mannitol 1-phosphate in the mannitol metabolic pathway. Has a strong preference for NADH over NADPH. Required for protection of conidiospores against exogenous stresses such as high temperatures and an oxidative environment.</text>
</comment>
<comment type="catalytic activity">
    <reaction evidence="3">
        <text>D-mannitol 1-phosphate + NAD(+) = beta-D-fructose 6-phosphate + NADH + H(+)</text>
        <dbReference type="Rhea" id="RHEA:19661"/>
        <dbReference type="ChEBI" id="CHEBI:15378"/>
        <dbReference type="ChEBI" id="CHEBI:57540"/>
        <dbReference type="ChEBI" id="CHEBI:57634"/>
        <dbReference type="ChEBI" id="CHEBI:57945"/>
        <dbReference type="ChEBI" id="CHEBI:61381"/>
        <dbReference type="EC" id="1.1.1.17"/>
    </reaction>
</comment>
<comment type="biophysicochemical properties">
    <kinetics>
        <KM evidence="3">0.038 mM for D-mannitol 1-phosphate</KM>
        <KM evidence="3">0.54 mM for D-fructose 6-phosphate</KM>
        <KM evidence="3">0.005 mM for NADH</KM>
        <KM evidence="3">0.083 mM for NAD(+)</KM>
    </kinetics>
</comment>
<comment type="subunit">
    <text evidence="1">Monomer.</text>
</comment>
<comment type="induction">
    <text evidence="2">Strongly induced at the onset of sporulation.</text>
</comment>
<comment type="similarity">
    <text evidence="4">Belongs to the mannitol dehydrogenase family.</text>
</comment>
<accession>Q8NJJ1</accession>
<sequence>MGKKAIQFGGGNIGRGFVAEFLHKAGYEVVFVDVMDKMVEALQQNKSYKVTEVSEEGEHTTTITNYRAINSKTHESDVIQEIATADVVTCAVGPHILKFIAPVIAKGIDARTESKPVAVIACENAIGATDTLHGFIKQHTSQDRVESLYDRAQFANSAIDRIVPQQAPNSGLDVRIEKFYEWAVEKTPFGSVGHPDIPAIHWVDNLEPYIERKLFTVNTSHATTAYFGHFRGKKMIADALEDEEIRGLVHKVLEETASLIVAKHDISEEEQKEYVKKIVSRISNPYLEDKVERVGRAPLRKLSRKERFIGPASQLAERGMKYDSLMDAVEMALRFQNVPGDDESAELANILNEQRAEDATIHLTGLDEEHPLYPAVLERVRKVQQGTK</sequence>